<dbReference type="EMBL" id="CP000927">
    <property type="protein sequence ID" value="ABZ69775.1"/>
    <property type="molecule type" value="Genomic_DNA"/>
</dbReference>
<dbReference type="SMR" id="B0T874"/>
<dbReference type="STRING" id="366602.Caul_0642"/>
<dbReference type="KEGG" id="cak:Caul_0642"/>
<dbReference type="eggNOG" id="COG0230">
    <property type="taxonomic scope" value="Bacteria"/>
</dbReference>
<dbReference type="HOGENOM" id="CLU_129938_2_0_5"/>
<dbReference type="OrthoDB" id="9804164at2"/>
<dbReference type="GO" id="GO:1990904">
    <property type="term" value="C:ribonucleoprotein complex"/>
    <property type="evidence" value="ECO:0007669"/>
    <property type="project" value="UniProtKB-KW"/>
</dbReference>
<dbReference type="GO" id="GO:0005840">
    <property type="term" value="C:ribosome"/>
    <property type="evidence" value="ECO:0007669"/>
    <property type="project" value="UniProtKB-KW"/>
</dbReference>
<dbReference type="GO" id="GO:0003735">
    <property type="term" value="F:structural constituent of ribosome"/>
    <property type="evidence" value="ECO:0007669"/>
    <property type="project" value="InterPro"/>
</dbReference>
<dbReference type="GO" id="GO:0006412">
    <property type="term" value="P:translation"/>
    <property type="evidence" value="ECO:0007669"/>
    <property type="project" value="UniProtKB-UniRule"/>
</dbReference>
<dbReference type="FunFam" id="1.10.287.3980:FF:000001">
    <property type="entry name" value="Mitochondrial ribosomal protein L34"/>
    <property type="match status" value="1"/>
</dbReference>
<dbReference type="Gene3D" id="1.10.287.3980">
    <property type="match status" value="1"/>
</dbReference>
<dbReference type="HAMAP" id="MF_00391">
    <property type="entry name" value="Ribosomal_bL34"/>
    <property type="match status" value="1"/>
</dbReference>
<dbReference type="InterPro" id="IPR000271">
    <property type="entry name" value="Ribosomal_bL34"/>
</dbReference>
<dbReference type="NCBIfam" id="TIGR01030">
    <property type="entry name" value="rpmH_bact"/>
    <property type="match status" value="1"/>
</dbReference>
<dbReference type="PANTHER" id="PTHR14503:SF4">
    <property type="entry name" value="LARGE RIBOSOMAL SUBUNIT PROTEIN BL34M"/>
    <property type="match status" value="1"/>
</dbReference>
<dbReference type="PANTHER" id="PTHR14503">
    <property type="entry name" value="MITOCHONDRIAL RIBOSOMAL PROTEIN 34 FAMILY MEMBER"/>
    <property type="match status" value="1"/>
</dbReference>
<dbReference type="Pfam" id="PF00468">
    <property type="entry name" value="Ribosomal_L34"/>
    <property type="match status" value="1"/>
</dbReference>
<keyword id="KW-0687">Ribonucleoprotein</keyword>
<keyword id="KW-0689">Ribosomal protein</keyword>
<evidence type="ECO:0000255" key="1">
    <source>
        <dbReference type="HAMAP-Rule" id="MF_00391"/>
    </source>
</evidence>
<evidence type="ECO:0000305" key="2"/>
<feature type="chain" id="PRO_1000080242" description="Large ribosomal subunit protein bL34">
    <location>
        <begin position="1"/>
        <end position="44"/>
    </location>
</feature>
<comment type="similarity">
    <text evidence="1">Belongs to the bacterial ribosomal protein bL34 family.</text>
</comment>
<gene>
    <name evidence="1" type="primary">rpmH</name>
    <name type="ordered locus">Caul_0642</name>
</gene>
<organism>
    <name type="scientific">Caulobacter sp. (strain K31)</name>
    <dbReference type="NCBI Taxonomy" id="366602"/>
    <lineage>
        <taxon>Bacteria</taxon>
        <taxon>Pseudomonadati</taxon>
        <taxon>Pseudomonadota</taxon>
        <taxon>Alphaproteobacteria</taxon>
        <taxon>Caulobacterales</taxon>
        <taxon>Caulobacteraceae</taxon>
        <taxon>Caulobacter</taxon>
    </lineage>
</organism>
<reference key="1">
    <citation type="submission" date="2008-01" db="EMBL/GenBank/DDBJ databases">
        <title>Complete sequence of chromosome of Caulobacter sp. K31.</title>
        <authorList>
            <consortium name="US DOE Joint Genome Institute"/>
            <person name="Copeland A."/>
            <person name="Lucas S."/>
            <person name="Lapidus A."/>
            <person name="Barry K."/>
            <person name="Glavina del Rio T."/>
            <person name="Dalin E."/>
            <person name="Tice H."/>
            <person name="Pitluck S."/>
            <person name="Bruce D."/>
            <person name="Goodwin L."/>
            <person name="Thompson L.S."/>
            <person name="Brettin T."/>
            <person name="Detter J.C."/>
            <person name="Han C."/>
            <person name="Schmutz J."/>
            <person name="Larimer F."/>
            <person name="Land M."/>
            <person name="Hauser L."/>
            <person name="Kyrpides N."/>
            <person name="Kim E."/>
            <person name="Stephens C."/>
            <person name="Richardson P."/>
        </authorList>
    </citation>
    <scope>NUCLEOTIDE SEQUENCE [LARGE SCALE GENOMIC DNA]</scope>
    <source>
        <strain>K31</strain>
    </source>
</reference>
<sequence length="44" mass="5208">MKRTFQPSKLVRARRHGYRARMATKNGQKIVARRRAKGRKRLTA</sequence>
<accession>B0T874</accession>
<name>RL34_CAUSK</name>
<protein>
    <recommendedName>
        <fullName evidence="1">Large ribosomal subunit protein bL34</fullName>
    </recommendedName>
    <alternativeName>
        <fullName evidence="2">50S ribosomal protein L34</fullName>
    </alternativeName>
</protein>
<proteinExistence type="inferred from homology"/>